<protein>
    <recommendedName>
        <fullName evidence="5">Prenyl transferase ptmC</fullName>
        <ecNumber evidence="4">2.5.1.-</ecNumber>
    </recommendedName>
    <alternativeName>
        <fullName evidence="5">Penitrem biosynthesis cluster 1 protein C</fullName>
    </alternativeName>
</protein>
<comment type="function">
    <text evidence="4">Prenyl transferase; part of the gene cluster that mediates the biosynthesis of the indole diterpenes penitrems (PubMed:25831977). The geranylgeranyl diphosphate (GGPP) synthase ptmG catalyzes the first step in penitrem biosynthesis via conversion of farnesyl pyrophosphate and isopentyl pyrophosphate into geranylgeranyl pyrophosphate (GGPP) (PubMed:25831977). Condensation of indole-3-glycerol phosphate with GGPP by the prenyl transferase ptmC then forms 3-geranylgeranylindole (3-GGI) (PubMed:25831977). Epoxidation by the FAD-dependent monooxygenase ptmM leads to a epoxidized-GGI that is substrate of the terpene cyclase ptmB for cyclization to yield paspaline (PubMed:25831977). Paspaline is subsequently converted to 13-desoxypaxilline by the cytochrome P450 monooxygenase ptmP, the latter being then converted to paxilline by the cytochrome P450 monooxygenase ptmQ (PubMed:25831977). Paxilline is converted to beta-paxitriol via C-10 ketoreduction by the short-chain dehydrogenase ptmH which can be monoprenylated at the C-20 by the indole diterpene prenyltransferase ptmD (PubMed:25831977). A two-step elimination (acetylation and elimination) process performed by the O-acetyltransferase ptmV and ptmI leads to the production of the prenylated form of penijanthine (PubMed:25831977). The FAD-linked oxidoreductase ptmO then converts the prenylated form of penijanthine into PC-M5 which is in turn transformed into PC-M4 by the aromatic dimethylallyltransferase ptmE (PubMed:25831977). Five sequential oxidative transformations performed by the cytochrome P450 monooxygenases ptmK, ptmU, ptmL, ptmN and ptmJ yield the various penitrem compounds. PtmK, ptmU and ptmM are involved in the formation of the key bicyclic ring of penitrem C via the formation of the intermediates secopenitrem D and penitrem D. PtmL catalyzes the epoxidation of penitrem D and C to yield penitrem B and F, respectively. PtmJ catalyzes the last benzylic hydroxylation to convert penitrem B to prenitrem E and penitrem F to penitrem A (PubMed:25831977).</text>
</comment>
<comment type="pathway">
    <text evidence="4">Secondary metabolite biosynthesis.</text>
</comment>
<comment type="subcellular location">
    <subcellularLocation>
        <location evidence="2">Membrane</location>
        <topology evidence="2">Single-pass membrane protein</topology>
    </subcellularLocation>
</comment>
<comment type="similarity">
    <text evidence="6">Belongs to the FPP/GGPP synthase family.</text>
</comment>
<reference key="1">
    <citation type="journal article" date="2015" name="Angew. Chem. Int. Ed.">
        <title>Reconstitution of biosynthetic machinery for the synthesis of the highly elaborated indole diterpene penitrem.</title>
        <authorList>
            <person name="Liu C."/>
            <person name="Tagami K."/>
            <person name="Minami A."/>
            <person name="Matsumoto T."/>
            <person name="Frisvad J.C."/>
            <person name="Suzuki H."/>
            <person name="Ishikawa J."/>
            <person name="Gomi K."/>
            <person name="Oikawa H."/>
        </authorList>
    </citation>
    <scope>NUCLEOTIDE SEQUENCE [GENOMIC DNA]</scope>
    <scope>IDENTIFICATION</scope>
    <scope>FUNCTION</scope>
    <scope>PATHWAY</scope>
    <source>
        <strain>ATCC 90288 / AK-40</strain>
    </source>
</reference>
<keyword id="KW-0325">Glycoprotein</keyword>
<keyword id="KW-0460">Magnesium</keyword>
<keyword id="KW-0472">Membrane</keyword>
<keyword id="KW-0479">Metal-binding</keyword>
<keyword id="KW-0808">Transferase</keyword>
<keyword id="KW-0812">Transmembrane</keyword>
<keyword id="KW-1133">Transmembrane helix</keyword>
<dbReference type="EC" id="2.5.1.-" evidence="4"/>
<dbReference type="EMBL" id="LC027936">
    <property type="protein sequence ID" value="BAU61560.1"/>
    <property type="molecule type" value="Genomic_DNA"/>
</dbReference>
<dbReference type="SMR" id="A0A140JWT3"/>
<dbReference type="GlyCosmos" id="A0A140JWT3">
    <property type="glycosylation" value="1 site, No reported glycans"/>
</dbReference>
<dbReference type="GO" id="GO:0016020">
    <property type="term" value="C:membrane"/>
    <property type="evidence" value="ECO:0007669"/>
    <property type="project" value="UniProtKB-SubCell"/>
</dbReference>
<dbReference type="GO" id="GO:0046872">
    <property type="term" value="F:metal ion binding"/>
    <property type="evidence" value="ECO:0007669"/>
    <property type="project" value="UniProtKB-KW"/>
</dbReference>
<dbReference type="GO" id="GO:0004659">
    <property type="term" value="F:prenyltransferase activity"/>
    <property type="evidence" value="ECO:0007669"/>
    <property type="project" value="InterPro"/>
</dbReference>
<dbReference type="GO" id="GO:0046165">
    <property type="term" value="P:alcohol biosynthetic process"/>
    <property type="evidence" value="ECO:0007669"/>
    <property type="project" value="UniProtKB-ARBA"/>
</dbReference>
<dbReference type="GO" id="GO:0008299">
    <property type="term" value="P:isoprenoid biosynthetic process"/>
    <property type="evidence" value="ECO:0007669"/>
    <property type="project" value="InterPro"/>
</dbReference>
<dbReference type="GO" id="GO:0043386">
    <property type="term" value="P:mycotoxin biosynthetic process"/>
    <property type="evidence" value="ECO:0007669"/>
    <property type="project" value="UniProtKB-ARBA"/>
</dbReference>
<dbReference type="CDD" id="cd00867">
    <property type="entry name" value="Trans_IPPS"/>
    <property type="match status" value="1"/>
</dbReference>
<dbReference type="Gene3D" id="1.10.600.10">
    <property type="entry name" value="Farnesyl Diphosphate Synthase"/>
    <property type="match status" value="1"/>
</dbReference>
<dbReference type="InterPro" id="IPR008949">
    <property type="entry name" value="Isoprenoid_synthase_dom_sf"/>
</dbReference>
<dbReference type="InterPro" id="IPR000092">
    <property type="entry name" value="Polyprenyl_synt"/>
</dbReference>
<dbReference type="PANTHER" id="PTHR12001">
    <property type="entry name" value="GERANYLGERANYL PYROPHOSPHATE SYNTHASE"/>
    <property type="match status" value="1"/>
</dbReference>
<dbReference type="PANTHER" id="PTHR12001:SF72">
    <property type="entry name" value="THIJ_PFPI FAMILY PROTEIN (AFU_ORTHOLOGUE AFUA_3G01210)-RELATED"/>
    <property type="match status" value="1"/>
</dbReference>
<dbReference type="Pfam" id="PF00348">
    <property type="entry name" value="polyprenyl_synt"/>
    <property type="match status" value="1"/>
</dbReference>
<dbReference type="SUPFAM" id="SSF48576">
    <property type="entry name" value="Terpenoid synthases"/>
    <property type="match status" value="1"/>
</dbReference>
<name>PTMC_PENOH</name>
<proteinExistence type="inferred from homology"/>
<evidence type="ECO:0000250" key="1">
    <source>
        <dbReference type="UniProtKB" id="Q12051"/>
    </source>
</evidence>
<evidence type="ECO:0000255" key="2"/>
<evidence type="ECO:0000255" key="3">
    <source>
        <dbReference type="PROSITE-ProRule" id="PRU00498"/>
    </source>
</evidence>
<evidence type="ECO:0000269" key="4">
    <source>
    </source>
</evidence>
<evidence type="ECO:0000303" key="5">
    <source>
    </source>
</evidence>
<evidence type="ECO:0000305" key="6"/>
<accession>A0A140JWT3</accession>
<feature type="chain" id="PRO_0000446550" description="Prenyl transferase ptmC">
    <location>
        <begin position="1"/>
        <end position="342"/>
    </location>
</feature>
<feature type="transmembrane region" description="Helical" evidence="2">
    <location>
        <begin position="17"/>
        <end position="37"/>
    </location>
</feature>
<feature type="binding site" evidence="1">
    <location>
        <position position="110"/>
    </location>
    <ligand>
        <name>isopentenyl diphosphate</name>
        <dbReference type="ChEBI" id="CHEBI:128769"/>
    </ligand>
</feature>
<feature type="binding site" evidence="1">
    <location>
        <position position="117"/>
    </location>
    <ligand>
        <name>Mg(2+)</name>
        <dbReference type="ChEBI" id="CHEBI:18420"/>
        <label>1</label>
    </ligand>
</feature>
<feature type="binding site" evidence="1">
    <location>
        <position position="117"/>
    </location>
    <ligand>
        <name>Mg(2+)</name>
        <dbReference type="ChEBI" id="CHEBI:18420"/>
        <label>2</label>
    </ligand>
</feature>
<feature type="binding site" evidence="1">
    <location>
        <position position="121"/>
    </location>
    <ligand>
        <name>Mg(2+)</name>
        <dbReference type="ChEBI" id="CHEBI:18420"/>
        <label>1</label>
    </ligand>
</feature>
<feature type="binding site" evidence="1">
    <location>
        <position position="121"/>
    </location>
    <ligand>
        <name>Mg(2+)</name>
        <dbReference type="ChEBI" id="CHEBI:18420"/>
        <label>2</label>
    </ligand>
</feature>
<feature type="binding site" evidence="1">
    <location>
        <position position="126"/>
    </location>
    <ligand>
        <name>dimethylallyl diphosphate</name>
        <dbReference type="ChEBI" id="CHEBI:57623"/>
    </ligand>
</feature>
<feature type="binding site" evidence="1">
    <location>
        <position position="210"/>
    </location>
    <ligand>
        <name>dimethylallyl diphosphate</name>
        <dbReference type="ChEBI" id="CHEBI:57623"/>
    </ligand>
</feature>
<feature type="binding site" evidence="1">
    <location>
        <position position="211"/>
    </location>
    <ligand>
        <name>dimethylallyl diphosphate</name>
        <dbReference type="ChEBI" id="CHEBI:57623"/>
    </ligand>
</feature>
<feature type="binding site" evidence="1">
    <location>
        <position position="240"/>
    </location>
    <ligand>
        <name>dimethylallyl diphosphate</name>
        <dbReference type="ChEBI" id="CHEBI:57623"/>
    </ligand>
</feature>
<feature type="binding site" evidence="1">
    <location>
        <position position="247"/>
    </location>
    <ligand>
        <name>dimethylallyl diphosphate</name>
        <dbReference type="ChEBI" id="CHEBI:57623"/>
    </ligand>
</feature>
<feature type="binding site" evidence="1">
    <location>
        <position position="257"/>
    </location>
    <ligand>
        <name>dimethylallyl diphosphate</name>
        <dbReference type="ChEBI" id="CHEBI:57623"/>
    </ligand>
</feature>
<feature type="site" description="Important for determining product chain length" evidence="1">
    <location>
        <position position="146"/>
    </location>
</feature>
<feature type="glycosylation site" description="N-linked (GlcNAc...) asparagine" evidence="3">
    <location>
        <position position="154"/>
    </location>
</feature>
<gene>
    <name evidence="5" type="primary">ptmC</name>
</gene>
<sequence>MTTMLTTPLSGWSQLSLSFLTLTVGALALIVVLYISIDRFPAPRWLSKKYQLIGQKDPASTTSLECPYSYIRQIYGHYHWAPFVHKLSPTLQYDDPAKYKMVLEIMDAIHLCLMLVDDISDGSDFRKGRPAAHRIYGPSETANRAYLRVTQILNQTTSGFPHLAPWLMRDLENILEGQDLSLVWRRDGLKNFPTAPLERAAAYQRMASLKTGSLFRLLGHLVLEDRSMDDTMTLVAWYSQLQNDCKNVYSTEYAKMKGAIAEDLSNGELSYPIVLAMNAPDGHWVDLALQSPSPWNVRNALRVIRSDKVHQMCMAEMAESSSSIQDWLALWGRKEKLDLKSV</sequence>
<organism>
    <name type="scientific">Penicillium ochrochloron</name>
    <dbReference type="NCBI Taxonomy" id="69780"/>
    <lineage>
        <taxon>Eukaryota</taxon>
        <taxon>Fungi</taxon>
        <taxon>Dikarya</taxon>
        <taxon>Ascomycota</taxon>
        <taxon>Pezizomycotina</taxon>
        <taxon>Eurotiomycetes</taxon>
        <taxon>Eurotiomycetidae</taxon>
        <taxon>Eurotiales</taxon>
        <taxon>Aspergillaceae</taxon>
        <taxon>Penicillium</taxon>
    </lineage>
</organism>